<reference key="1">
    <citation type="journal article" date="2002" name="Proc. Natl. Acad. Sci. U.S.A.">
        <title>Genome sequence and comparative microarray analysis of serotype M18 group A Streptococcus strains associated with acute rheumatic fever outbreaks.</title>
        <authorList>
            <person name="Smoot J.C."/>
            <person name="Barbian K.D."/>
            <person name="Van Gompel J.J."/>
            <person name="Smoot L.M."/>
            <person name="Chaussee M.S."/>
            <person name="Sylva G.L."/>
            <person name="Sturdevant D.E."/>
            <person name="Ricklefs S.M."/>
            <person name="Porcella S.F."/>
            <person name="Parkins L.D."/>
            <person name="Beres S.B."/>
            <person name="Campbell D.S."/>
            <person name="Smith T.M."/>
            <person name="Zhang Q."/>
            <person name="Kapur V."/>
            <person name="Daly J.A."/>
            <person name="Veasy L.G."/>
            <person name="Musser J.M."/>
        </authorList>
    </citation>
    <scope>NUCLEOTIDE SEQUENCE [LARGE SCALE GENOMIC DNA]</scope>
    <source>
        <strain>MGAS8232</strain>
    </source>
</reference>
<protein>
    <recommendedName>
        <fullName evidence="1">Bifunctional protein GlmU</fullName>
    </recommendedName>
    <domain>
        <recommendedName>
            <fullName evidence="1">UDP-N-acetylglucosamine pyrophosphorylase</fullName>
            <ecNumber evidence="1">2.7.7.23</ecNumber>
        </recommendedName>
        <alternativeName>
            <fullName evidence="1">N-acetylglucosamine-1-phosphate uridyltransferase</fullName>
        </alternativeName>
    </domain>
    <domain>
        <recommendedName>
            <fullName evidence="1">Glucosamine-1-phosphate N-acetyltransferase</fullName>
            <ecNumber evidence="1">2.3.1.157</ecNumber>
        </recommendedName>
    </domain>
</protein>
<sequence length="460" mass="49635">MTNYAIILAAGKGTRMTSDLPKVLHKVSGLTMLEHVFRSVKAISPEKSVTVIGHKSEMVRAVLADQSAFVHQTEQLGTGHAVMMAETQLEGLEGHTLVIAGDTPLITGESLKSLIDFHVNHKNVATILTATAPDPFGYGRIVRNKDGEVIKIVEQKDANEYEQQLKEINTGTYVFDNKRLFEALKCITTNNAQGEYYLTDVVAIFRANKEKVGAYILRDFNESLGVNDRVALATAETVMRQRITQKHMVNGVTFQNPETVYIESDVEIAPDVLIEGNVTLKGRTHIGSGTVLTNGTYIVDSEIGQGSIITNSMIESSVLAAGVTVGPYAHLRPGTTLDREVHIGNFVEVKDSHIGEKTKAGHLTYIGNAQVGSSVNVGAGTITVNYDGQNKYETVIGDHAFIGSNSTLIAPLEVGDNALTAAGSTISKTVPADSIVIGRSRQVTKEGYAKRLAHHPSRSK</sequence>
<name>GLMU_STRP8</name>
<proteinExistence type="inferred from homology"/>
<keyword id="KW-0012">Acyltransferase</keyword>
<keyword id="KW-0133">Cell shape</keyword>
<keyword id="KW-0961">Cell wall biogenesis/degradation</keyword>
<keyword id="KW-0963">Cytoplasm</keyword>
<keyword id="KW-0460">Magnesium</keyword>
<keyword id="KW-0479">Metal-binding</keyword>
<keyword id="KW-0511">Multifunctional enzyme</keyword>
<keyword id="KW-0548">Nucleotidyltransferase</keyword>
<keyword id="KW-0573">Peptidoglycan synthesis</keyword>
<keyword id="KW-0677">Repeat</keyword>
<keyword id="KW-0808">Transferase</keyword>
<evidence type="ECO:0000255" key="1">
    <source>
        <dbReference type="HAMAP-Rule" id="MF_01631"/>
    </source>
</evidence>
<gene>
    <name evidence="1" type="primary">glmU</name>
    <name type="ordered locus">spyM18_0486</name>
</gene>
<feature type="chain" id="PRO_0000233853" description="Bifunctional protein GlmU">
    <location>
        <begin position="1"/>
        <end position="460"/>
    </location>
</feature>
<feature type="region of interest" description="Pyrophosphorylase" evidence="1">
    <location>
        <begin position="1"/>
        <end position="229"/>
    </location>
</feature>
<feature type="region of interest" description="Linker" evidence="1">
    <location>
        <begin position="230"/>
        <end position="250"/>
    </location>
</feature>
<feature type="region of interest" description="N-acetyltransferase" evidence="1">
    <location>
        <begin position="251"/>
        <end position="460"/>
    </location>
</feature>
<feature type="active site" description="Proton acceptor" evidence="1">
    <location>
        <position position="362"/>
    </location>
</feature>
<feature type="binding site" evidence="1">
    <location>
        <begin position="8"/>
        <end position="11"/>
    </location>
    <ligand>
        <name>UDP-N-acetyl-alpha-D-glucosamine</name>
        <dbReference type="ChEBI" id="CHEBI:57705"/>
    </ligand>
</feature>
<feature type="binding site" evidence="1">
    <location>
        <position position="22"/>
    </location>
    <ligand>
        <name>UDP-N-acetyl-alpha-D-glucosamine</name>
        <dbReference type="ChEBI" id="CHEBI:57705"/>
    </ligand>
</feature>
<feature type="binding site" evidence="1">
    <location>
        <position position="72"/>
    </location>
    <ligand>
        <name>UDP-N-acetyl-alpha-D-glucosamine</name>
        <dbReference type="ChEBI" id="CHEBI:57705"/>
    </ligand>
</feature>
<feature type="binding site" evidence="1">
    <location>
        <begin position="77"/>
        <end position="78"/>
    </location>
    <ligand>
        <name>UDP-N-acetyl-alpha-D-glucosamine</name>
        <dbReference type="ChEBI" id="CHEBI:57705"/>
    </ligand>
</feature>
<feature type="binding site" evidence="1">
    <location>
        <position position="102"/>
    </location>
    <ligand>
        <name>Mg(2+)</name>
        <dbReference type="ChEBI" id="CHEBI:18420"/>
    </ligand>
</feature>
<feature type="binding site" evidence="1">
    <location>
        <position position="139"/>
    </location>
    <ligand>
        <name>UDP-N-acetyl-alpha-D-glucosamine</name>
        <dbReference type="ChEBI" id="CHEBI:57705"/>
    </ligand>
</feature>
<feature type="binding site" evidence="1">
    <location>
        <position position="154"/>
    </location>
    <ligand>
        <name>UDP-N-acetyl-alpha-D-glucosamine</name>
        <dbReference type="ChEBI" id="CHEBI:57705"/>
    </ligand>
</feature>
<feature type="binding site" evidence="1">
    <location>
        <position position="169"/>
    </location>
    <ligand>
        <name>UDP-N-acetyl-alpha-D-glucosamine</name>
        <dbReference type="ChEBI" id="CHEBI:57705"/>
    </ligand>
</feature>
<feature type="binding site" evidence="1">
    <location>
        <position position="227"/>
    </location>
    <ligand>
        <name>Mg(2+)</name>
        <dbReference type="ChEBI" id="CHEBI:18420"/>
    </ligand>
</feature>
<feature type="binding site" evidence="1">
    <location>
        <position position="227"/>
    </location>
    <ligand>
        <name>UDP-N-acetyl-alpha-D-glucosamine</name>
        <dbReference type="ChEBI" id="CHEBI:57705"/>
    </ligand>
</feature>
<feature type="binding site" evidence="1">
    <location>
        <position position="332"/>
    </location>
    <ligand>
        <name>UDP-N-acetyl-alpha-D-glucosamine</name>
        <dbReference type="ChEBI" id="CHEBI:57705"/>
    </ligand>
</feature>
<feature type="binding site" evidence="1">
    <location>
        <position position="350"/>
    </location>
    <ligand>
        <name>UDP-N-acetyl-alpha-D-glucosamine</name>
        <dbReference type="ChEBI" id="CHEBI:57705"/>
    </ligand>
</feature>
<feature type="binding site" evidence="1">
    <location>
        <position position="365"/>
    </location>
    <ligand>
        <name>UDP-N-acetyl-alpha-D-glucosamine</name>
        <dbReference type="ChEBI" id="CHEBI:57705"/>
    </ligand>
</feature>
<feature type="binding site" evidence="1">
    <location>
        <position position="376"/>
    </location>
    <ligand>
        <name>UDP-N-acetyl-alpha-D-glucosamine</name>
        <dbReference type="ChEBI" id="CHEBI:57705"/>
    </ligand>
</feature>
<feature type="binding site" evidence="1">
    <location>
        <position position="379"/>
    </location>
    <ligand>
        <name>acetyl-CoA</name>
        <dbReference type="ChEBI" id="CHEBI:57288"/>
    </ligand>
</feature>
<feature type="binding site" evidence="1">
    <location>
        <begin position="385"/>
        <end position="386"/>
    </location>
    <ligand>
        <name>acetyl-CoA</name>
        <dbReference type="ChEBI" id="CHEBI:57288"/>
    </ligand>
</feature>
<feature type="binding site" evidence="1">
    <location>
        <position position="404"/>
    </location>
    <ligand>
        <name>acetyl-CoA</name>
        <dbReference type="ChEBI" id="CHEBI:57288"/>
    </ligand>
</feature>
<feature type="binding site" evidence="1">
    <location>
        <position position="422"/>
    </location>
    <ligand>
        <name>acetyl-CoA</name>
        <dbReference type="ChEBI" id="CHEBI:57288"/>
    </ligand>
</feature>
<feature type="binding site" evidence="1">
    <location>
        <position position="439"/>
    </location>
    <ligand>
        <name>acetyl-CoA</name>
        <dbReference type="ChEBI" id="CHEBI:57288"/>
    </ligand>
</feature>
<dbReference type="EC" id="2.7.7.23" evidence="1"/>
<dbReference type="EC" id="2.3.1.157" evidence="1"/>
<dbReference type="EMBL" id="AE009949">
    <property type="protein sequence ID" value="AAL97209.1"/>
    <property type="molecule type" value="Genomic_DNA"/>
</dbReference>
<dbReference type="RefSeq" id="WP_011017441.1">
    <property type="nucleotide sequence ID" value="NC_003485.1"/>
</dbReference>
<dbReference type="SMR" id="Q8P286"/>
<dbReference type="KEGG" id="spm:spyM18_0486"/>
<dbReference type="HOGENOM" id="CLU_029499_15_2_9"/>
<dbReference type="UniPathway" id="UPA00113">
    <property type="reaction ID" value="UER00532"/>
</dbReference>
<dbReference type="UniPathway" id="UPA00113">
    <property type="reaction ID" value="UER00533"/>
</dbReference>
<dbReference type="UniPathway" id="UPA00973"/>
<dbReference type="GO" id="GO:0005737">
    <property type="term" value="C:cytoplasm"/>
    <property type="evidence" value="ECO:0007669"/>
    <property type="project" value="UniProtKB-SubCell"/>
</dbReference>
<dbReference type="GO" id="GO:0016020">
    <property type="term" value="C:membrane"/>
    <property type="evidence" value="ECO:0007669"/>
    <property type="project" value="GOC"/>
</dbReference>
<dbReference type="GO" id="GO:0019134">
    <property type="term" value="F:glucosamine-1-phosphate N-acetyltransferase activity"/>
    <property type="evidence" value="ECO:0007669"/>
    <property type="project" value="UniProtKB-UniRule"/>
</dbReference>
<dbReference type="GO" id="GO:0000287">
    <property type="term" value="F:magnesium ion binding"/>
    <property type="evidence" value="ECO:0007669"/>
    <property type="project" value="UniProtKB-UniRule"/>
</dbReference>
<dbReference type="GO" id="GO:0003977">
    <property type="term" value="F:UDP-N-acetylglucosamine diphosphorylase activity"/>
    <property type="evidence" value="ECO:0007669"/>
    <property type="project" value="UniProtKB-UniRule"/>
</dbReference>
<dbReference type="GO" id="GO:0000902">
    <property type="term" value="P:cell morphogenesis"/>
    <property type="evidence" value="ECO:0007669"/>
    <property type="project" value="UniProtKB-UniRule"/>
</dbReference>
<dbReference type="GO" id="GO:0071555">
    <property type="term" value="P:cell wall organization"/>
    <property type="evidence" value="ECO:0007669"/>
    <property type="project" value="UniProtKB-KW"/>
</dbReference>
<dbReference type="GO" id="GO:0009245">
    <property type="term" value="P:lipid A biosynthetic process"/>
    <property type="evidence" value="ECO:0007669"/>
    <property type="project" value="UniProtKB-UniRule"/>
</dbReference>
<dbReference type="GO" id="GO:0009252">
    <property type="term" value="P:peptidoglycan biosynthetic process"/>
    <property type="evidence" value="ECO:0007669"/>
    <property type="project" value="UniProtKB-UniRule"/>
</dbReference>
<dbReference type="GO" id="GO:0008360">
    <property type="term" value="P:regulation of cell shape"/>
    <property type="evidence" value="ECO:0007669"/>
    <property type="project" value="UniProtKB-KW"/>
</dbReference>
<dbReference type="GO" id="GO:0006048">
    <property type="term" value="P:UDP-N-acetylglucosamine biosynthetic process"/>
    <property type="evidence" value="ECO:0007669"/>
    <property type="project" value="UniProtKB-UniPathway"/>
</dbReference>
<dbReference type="CDD" id="cd02540">
    <property type="entry name" value="GT2_GlmU_N_bac"/>
    <property type="match status" value="1"/>
</dbReference>
<dbReference type="CDD" id="cd03353">
    <property type="entry name" value="LbH_GlmU_C"/>
    <property type="match status" value="1"/>
</dbReference>
<dbReference type="Gene3D" id="2.160.10.10">
    <property type="entry name" value="Hexapeptide repeat proteins"/>
    <property type="match status" value="1"/>
</dbReference>
<dbReference type="Gene3D" id="3.90.550.10">
    <property type="entry name" value="Spore Coat Polysaccharide Biosynthesis Protein SpsA, Chain A"/>
    <property type="match status" value="1"/>
</dbReference>
<dbReference type="HAMAP" id="MF_01631">
    <property type="entry name" value="GlmU"/>
    <property type="match status" value="1"/>
</dbReference>
<dbReference type="InterPro" id="IPR005882">
    <property type="entry name" value="Bifunctional_GlmU"/>
</dbReference>
<dbReference type="InterPro" id="IPR050065">
    <property type="entry name" value="GlmU-like"/>
</dbReference>
<dbReference type="InterPro" id="IPR056818">
    <property type="entry name" value="GlmU/GlgC-like_hexapep"/>
</dbReference>
<dbReference type="InterPro" id="IPR038009">
    <property type="entry name" value="GlmU_C_LbH"/>
</dbReference>
<dbReference type="InterPro" id="IPR001451">
    <property type="entry name" value="Hexapep"/>
</dbReference>
<dbReference type="InterPro" id="IPR005835">
    <property type="entry name" value="NTP_transferase_dom"/>
</dbReference>
<dbReference type="InterPro" id="IPR029044">
    <property type="entry name" value="Nucleotide-diphossugar_trans"/>
</dbReference>
<dbReference type="InterPro" id="IPR011004">
    <property type="entry name" value="Trimer_LpxA-like_sf"/>
</dbReference>
<dbReference type="NCBIfam" id="TIGR01173">
    <property type="entry name" value="glmU"/>
    <property type="match status" value="1"/>
</dbReference>
<dbReference type="NCBIfam" id="NF010934">
    <property type="entry name" value="PRK14354.1"/>
    <property type="match status" value="1"/>
</dbReference>
<dbReference type="PANTHER" id="PTHR43584:SF3">
    <property type="entry name" value="BIFUNCTIONAL PROTEIN GLMU"/>
    <property type="match status" value="1"/>
</dbReference>
<dbReference type="PANTHER" id="PTHR43584">
    <property type="entry name" value="NUCLEOTIDYL TRANSFERASE"/>
    <property type="match status" value="1"/>
</dbReference>
<dbReference type="Pfam" id="PF00132">
    <property type="entry name" value="Hexapep"/>
    <property type="match status" value="1"/>
</dbReference>
<dbReference type="Pfam" id="PF24894">
    <property type="entry name" value="Hexapep_GlmU"/>
    <property type="match status" value="1"/>
</dbReference>
<dbReference type="Pfam" id="PF00483">
    <property type="entry name" value="NTP_transferase"/>
    <property type="match status" value="1"/>
</dbReference>
<dbReference type="SUPFAM" id="SSF53448">
    <property type="entry name" value="Nucleotide-diphospho-sugar transferases"/>
    <property type="match status" value="1"/>
</dbReference>
<dbReference type="SUPFAM" id="SSF51161">
    <property type="entry name" value="Trimeric LpxA-like enzymes"/>
    <property type="match status" value="1"/>
</dbReference>
<comment type="function">
    <text evidence="1">Catalyzes the last two sequential reactions in the de novo biosynthetic pathway for UDP-N-acetylglucosamine (UDP-GlcNAc). The C-terminal domain catalyzes the transfer of acetyl group from acetyl coenzyme A to glucosamine-1-phosphate (GlcN-1-P) to produce N-acetylglucosamine-1-phosphate (GlcNAc-1-P), which is converted into UDP-GlcNAc by the transfer of uridine 5-monophosphate (from uridine 5-triphosphate), a reaction catalyzed by the N-terminal domain.</text>
</comment>
<comment type="catalytic activity">
    <reaction evidence="1">
        <text>alpha-D-glucosamine 1-phosphate + acetyl-CoA = N-acetyl-alpha-D-glucosamine 1-phosphate + CoA + H(+)</text>
        <dbReference type="Rhea" id="RHEA:13725"/>
        <dbReference type="ChEBI" id="CHEBI:15378"/>
        <dbReference type="ChEBI" id="CHEBI:57287"/>
        <dbReference type="ChEBI" id="CHEBI:57288"/>
        <dbReference type="ChEBI" id="CHEBI:57776"/>
        <dbReference type="ChEBI" id="CHEBI:58516"/>
        <dbReference type="EC" id="2.3.1.157"/>
    </reaction>
</comment>
<comment type="catalytic activity">
    <reaction evidence="1">
        <text>N-acetyl-alpha-D-glucosamine 1-phosphate + UTP + H(+) = UDP-N-acetyl-alpha-D-glucosamine + diphosphate</text>
        <dbReference type="Rhea" id="RHEA:13509"/>
        <dbReference type="ChEBI" id="CHEBI:15378"/>
        <dbReference type="ChEBI" id="CHEBI:33019"/>
        <dbReference type="ChEBI" id="CHEBI:46398"/>
        <dbReference type="ChEBI" id="CHEBI:57705"/>
        <dbReference type="ChEBI" id="CHEBI:57776"/>
        <dbReference type="EC" id="2.7.7.23"/>
    </reaction>
</comment>
<comment type="cofactor">
    <cofactor evidence="1">
        <name>Mg(2+)</name>
        <dbReference type="ChEBI" id="CHEBI:18420"/>
    </cofactor>
    <text evidence="1">Binds 1 Mg(2+) ion per subunit.</text>
</comment>
<comment type="pathway">
    <text evidence="1">Nucleotide-sugar biosynthesis; UDP-N-acetyl-alpha-D-glucosamine biosynthesis; N-acetyl-alpha-D-glucosamine 1-phosphate from alpha-D-glucosamine 6-phosphate (route II): step 2/2.</text>
</comment>
<comment type="pathway">
    <text evidence="1">Nucleotide-sugar biosynthesis; UDP-N-acetyl-alpha-D-glucosamine biosynthesis; UDP-N-acetyl-alpha-D-glucosamine from N-acetyl-alpha-D-glucosamine 1-phosphate: step 1/1.</text>
</comment>
<comment type="pathway">
    <text evidence="1">Bacterial outer membrane biogenesis; LPS lipid A biosynthesis.</text>
</comment>
<comment type="subunit">
    <text evidence="1">Homotrimer.</text>
</comment>
<comment type="subcellular location">
    <subcellularLocation>
        <location evidence="1">Cytoplasm</location>
    </subcellularLocation>
</comment>
<comment type="similarity">
    <text evidence="1">In the N-terminal section; belongs to the N-acetylglucosamine-1-phosphate uridyltransferase family.</text>
</comment>
<comment type="similarity">
    <text evidence="1">In the C-terminal section; belongs to the transferase hexapeptide repeat family.</text>
</comment>
<accession>Q8P286</accession>
<organism>
    <name type="scientific">Streptococcus pyogenes serotype M18 (strain MGAS8232)</name>
    <dbReference type="NCBI Taxonomy" id="186103"/>
    <lineage>
        <taxon>Bacteria</taxon>
        <taxon>Bacillati</taxon>
        <taxon>Bacillota</taxon>
        <taxon>Bacilli</taxon>
        <taxon>Lactobacillales</taxon>
        <taxon>Streptococcaceae</taxon>
        <taxon>Streptococcus</taxon>
    </lineage>
</organism>